<gene>
    <name evidence="1" type="primary">hemA</name>
    <name type="ordered locus">UNCMA_19350</name>
    <name type="ORF">RCIX911</name>
</gene>
<keyword id="KW-0521">NADP</keyword>
<keyword id="KW-0560">Oxidoreductase</keyword>
<keyword id="KW-0627">Porphyrin biosynthesis</keyword>
<keyword id="KW-1185">Reference proteome</keyword>
<organism>
    <name type="scientific">Methanocella arvoryzae (strain DSM 22066 / NBRC 105507 / MRE50)</name>
    <dbReference type="NCBI Taxonomy" id="351160"/>
    <lineage>
        <taxon>Archaea</taxon>
        <taxon>Methanobacteriati</taxon>
        <taxon>Methanobacteriota</taxon>
        <taxon>Stenosarchaea group</taxon>
        <taxon>Methanomicrobia</taxon>
        <taxon>Methanocellales</taxon>
        <taxon>Methanocellaceae</taxon>
        <taxon>Methanocella</taxon>
    </lineage>
</organism>
<evidence type="ECO:0000255" key="1">
    <source>
        <dbReference type="HAMAP-Rule" id="MF_00087"/>
    </source>
</evidence>
<feature type="chain" id="PRO_1000004720" description="Glutamyl-tRNA reductase">
    <location>
        <begin position="1"/>
        <end position="427"/>
    </location>
</feature>
<feature type="active site" description="Nucleophile" evidence="1">
    <location>
        <position position="49"/>
    </location>
</feature>
<feature type="binding site" evidence="1">
    <location>
        <begin position="48"/>
        <end position="51"/>
    </location>
    <ligand>
        <name>substrate</name>
    </ligand>
</feature>
<feature type="binding site" evidence="1">
    <location>
        <position position="99"/>
    </location>
    <ligand>
        <name>substrate</name>
    </ligand>
</feature>
<feature type="binding site" evidence="1">
    <location>
        <begin position="104"/>
        <end position="106"/>
    </location>
    <ligand>
        <name>substrate</name>
    </ligand>
</feature>
<feature type="binding site" evidence="1">
    <location>
        <position position="110"/>
    </location>
    <ligand>
        <name>substrate</name>
    </ligand>
</feature>
<feature type="binding site" evidence="1">
    <location>
        <begin position="179"/>
        <end position="184"/>
    </location>
    <ligand>
        <name>NADP(+)</name>
        <dbReference type="ChEBI" id="CHEBI:58349"/>
    </ligand>
</feature>
<proteinExistence type="inferred from homology"/>
<reference key="1">
    <citation type="journal article" date="2006" name="Science">
        <title>Genome of rice cluster I archaea -- the key methane producers in the rice rhizosphere.</title>
        <authorList>
            <person name="Erkel C."/>
            <person name="Kube M."/>
            <person name="Reinhardt R."/>
            <person name="Liesack W."/>
        </authorList>
    </citation>
    <scope>NUCLEOTIDE SEQUENCE [LARGE SCALE GENOMIC DNA]</scope>
    <source>
        <strain>DSM 22066 / NBRC 105507 / MRE50</strain>
    </source>
</reference>
<protein>
    <recommendedName>
        <fullName evidence="1">Glutamyl-tRNA reductase</fullName>
        <shortName evidence="1">GluTR</shortName>
        <ecNumber evidence="1">1.2.1.70</ecNumber>
    </recommendedName>
</protein>
<name>HEM1_METAR</name>
<dbReference type="EC" id="1.2.1.70" evidence="1"/>
<dbReference type="EMBL" id="AM114193">
    <property type="protein sequence ID" value="CAJ36258.1"/>
    <property type="molecule type" value="Genomic_DNA"/>
</dbReference>
<dbReference type="RefSeq" id="WP_012036260.1">
    <property type="nucleotide sequence ID" value="NC_009464.1"/>
</dbReference>
<dbReference type="SMR" id="Q0W5T5"/>
<dbReference type="STRING" id="351160.RCIX911"/>
<dbReference type="GeneID" id="5145812"/>
<dbReference type="KEGG" id="rci:RCIX911"/>
<dbReference type="PATRIC" id="fig|351160.9.peg.1983"/>
<dbReference type="eggNOG" id="arCOG01036">
    <property type="taxonomic scope" value="Archaea"/>
</dbReference>
<dbReference type="OrthoDB" id="4562at2157"/>
<dbReference type="UniPathway" id="UPA00251">
    <property type="reaction ID" value="UER00316"/>
</dbReference>
<dbReference type="Proteomes" id="UP000000663">
    <property type="component" value="Chromosome"/>
</dbReference>
<dbReference type="GO" id="GO:0008883">
    <property type="term" value="F:glutamyl-tRNA reductase activity"/>
    <property type="evidence" value="ECO:0007669"/>
    <property type="project" value="UniProtKB-UniRule"/>
</dbReference>
<dbReference type="GO" id="GO:0050661">
    <property type="term" value="F:NADP binding"/>
    <property type="evidence" value="ECO:0007669"/>
    <property type="project" value="InterPro"/>
</dbReference>
<dbReference type="GO" id="GO:0019353">
    <property type="term" value="P:protoporphyrinogen IX biosynthetic process from glutamate"/>
    <property type="evidence" value="ECO:0007669"/>
    <property type="project" value="TreeGrafter"/>
</dbReference>
<dbReference type="CDD" id="cd05213">
    <property type="entry name" value="NAD_bind_Glutamyl_tRNA_reduct"/>
    <property type="match status" value="1"/>
</dbReference>
<dbReference type="FunFam" id="3.30.460.30:FF:000001">
    <property type="entry name" value="Glutamyl-tRNA reductase"/>
    <property type="match status" value="1"/>
</dbReference>
<dbReference type="FunFam" id="3.40.50.720:FF:000031">
    <property type="entry name" value="Glutamyl-tRNA reductase"/>
    <property type="match status" value="1"/>
</dbReference>
<dbReference type="Gene3D" id="3.30.460.30">
    <property type="entry name" value="Glutamyl-tRNA reductase, N-terminal domain"/>
    <property type="match status" value="1"/>
</dbReference>
<dbReference type="Gene3D" id="3.40.50.720">
    <property type="entry name" value="NAD(P)-binding Rossmann-like Domain"/>
    <property type="match status" value="1"/>
</dbReference>
<dbReference type="HAMAP" id="MF_00087">
    <property type="entry name" value="Glu_tRNA_reductase"/>
    <property type="match status" value="1"/>
</dbReference>
<dbReference type="InterPro" id="IPR000343">
    <property type="entry name" value="4pyrrol_synth_GluRdtase"/>
</dbReference>
<dbReference type="InterPro" id="IPR015896">
    <property type="entry name" value="4pyrrol_synth_GluRdtase_dimer"/>
</dbReference>
<dbReference type="InterPro" id="IPR015895">
    <property type="entry name" value="4pyrrol_synth_GluRdtase_N"/>
</dbReference>
<dbReference type="InterPro" id="IPR036453">
    <property type="entry name" value="GluRdtase_dimer_dom_sf"/>
</dbReference>
<dbReference type="InterPro" id="IPR036343">
    <property type="entry name" value="GluRdtase_N_sf"/>
</dbReference>
<dbReference type="InterPro" id="IPR036291">
    <property type="entry name" value="NAD(P)-bd_dom_sf"/>
</dbReference>
<dbReference type="InterPro" id="IPR006151">
    <property type="entry name" value="Shikm_DH/Glu-tRNA_Rdtase"/>
</dbReference>
<dbReference type="NCBIfam" id="TIGR01035">
    <property type="entry name" value="hemA"/>
    <property type="match status" value="1"/>
</dbReference>
<dbReference type="PANTHER" id="PTHR43013">
    <property type="entry name" value="GLUTAMYL-TRNA REDUCTASE"/>
    <property type="match status" value="1"/>
</dbReference>
<dbReference type="PANTHER" id="PTHR43013:SF1">
    <property type="entry name" value="GLUTAMYL-TRNA REDUCTASE"/>
    <property type="match status" value="1"/>
</dbReference>
<dbReference type="Pfam" id="PF00745">
    <property type="entry name" value="GlutR_dimer"/>
    <property type="match status" value="1"/>
</dbReference>
<dbReference type="Pfam" id="PF05201">
    <property type="entry name" value="GlutR_N"/>
    <property type="match status" value="1"/>
</dbReference>
<dbReference type="Pfam" id="PF01488">
    <property type="entry name" value="Shikimate_DH"/>
    <property type="match status" value="1"/>
</dbReference>
<dbReference type="PIRSF" id="PIRSF000445">
    <property type="entry name" value="4pyrrol_synth_GluRdtase"/>
    <property type="match status" value="1"/>
</dbReference>
<dbReference type="SUPFAM" id="SSF69742">
    <property type="entry name" value="Glutamyl tRNA-reductase catalytic, N-terminal domain"/>
    <property type="match status" value="1"/>
</dbReference>
<dbReference type="SUPFAM" id="SSF69075">
    <property type="entry name" value="Glutamyl tRNA-reductase dimerization domain"/>
    <property type="match status" value="1"/>
</dbReference>
<dbReference type="SUPFAM" id="SSF51735">
    <property type="entry name" value="NAD(P)-binding Rossmann-fold domains"/>
    <property type="match status" value="1"/>
</dbReference>
<accession>Q0W5T5</accession>
<comment type="function">
    <text evidence="1">Catalyzes the NADPH-dependent reduction of glutamyl-tRNA(Glu) to glutamate 1-semialdehyde (GSA).</text>
</comment>
<comment type="catalytic activity">
    <reaction evidence="1">
        <text>(S)-4-amino-5-oxopentanoate + tRNA(Glu) + NADP(+) = L-glutamyl-tRNA(Glu) + NADPH + H(+)</text>
        <dbReference type="Rhea" id="RHEA:12344"/>
        <dbReference type="Rhea" id="RHEA-COMP:9663"/>
        <dbReference type="Rhea" id="RHEA-COMP:9680"/>
        <dbReference type="ChEBI" id="CHEBI:15378"/>
        <dbReference type="ChEBI" id="CHEBI:57501"/>
        <dbReference type="ChEBI" id="CHEBI:57783"/>
        <dbReference type="ChEBI" id="CHEBI:58349"/>
        <dbReference type="ChEBI" id="CHEBI:78442"/>
        <dbReference type="ChEBI" id="CHEBI:78520"/>
        <dbReference type="EC" id="1.2.1.70"/>
    </reaction>
</comment>
<comment type="pathway">
    <text evidence="1">Porphyrin-containing compound metabolism; protoporphyrin-IX biosynthesis; 5-aminolevulinate from L-glutamyl-tRNA(Glu): step 1/2.</text>
</comment>
<comment type="subunit">
    <text evidence="1">Homodimer.</text>
</comment>
<comment type="domain">
    <text evidence="1">Possesses an unusual extended V-shaped dimeric structure with each monomer consisting of three distinct domains arranged along a curved 'spinal' alpha-helix. The N-terminal catalytic domain specifically recognizes the glutamate moiety of the substrate. The second domain is the NADPH-binding domain, and the third C-terminal domain is responsible for dimerization.</text>
</comment>
<comment type="miscellaneous">
    <text evidence="1">During catalysis, the active site Cys acts as a nucleophile attacking the alpha-carbonyl group of tRNA-bound glutamate with the formation of a thioester intermediate between enzyme and glutamate, and the concomitant release of tRNA(Glu). The thioester intermediate is finally reduced by direct hydride transfer from NADPH, to form the product GSA.</text>
</comment>
<comment type="similarity">
    <text evidence="1">Belongs to the glutamyl-tRNA reductase family.</text>
</comment>
<sequence>MAQVCSISVNHRHAGIEGIERARFRDPDVAMLRLLSLPGVSEAVVLQTCNRVEIYAVAESVEDIVGFARAEGMPLEIAEVRAGDDCLKGLLRLACGLESMIVGEDQILGQLKTALLQARRLGTIGPVLSTAIQKSIHVGARARIETEINKGSVSIGSAAVELAESLLGDLRGRTILVVGAGEMGTLVANAMAEKSLRAIYVANRTFEQAEKLASSLQGVAIRLERLCDYMGSADVVICATGAPHLIITKKMVEQCKGEKPLIFIDITNPRNIEETVGEVPGVTLHNIDSLRQINEASMRRRQGEARKVEAIIEEELVLLQRDIRRLHADRVIGDLYQRTDHIRATELRRAVARLSTAGSLTEQQISILHDFSMALTNKILAAPTRQLRRAAERCDEDCLRTAEELFDLWVEESNGIPGNKTKASKTD</sequence>